<accession>Q9WYB1</accession>
<name>ACKA_THEMA</name>
<protein>
    <recommendedName>
        <fullName evidence="1">Acetate kinase</fullName>
        <ecNumber evidence="1">2.7.2.1</ecNumber>
    </recommendedName>
    <alternativeName>
        <fullName evidence="1">Acetokinase</fullName>
    </alternativeName>
</protein>
<keyword id="KW-0002">3D-structure</keyword>
<keyword id="KW-0067">ATP-binding</keyword>
<keyword id="KW-0963">Cytoplasm</keyword>
<keyword id="KW-0903">Direct protein sequencing</keyword>
<keyword id="KW-0418">Kinase</keyword>
<keyword id="KW-0460">Magnesium</keyword>
<keyword id="KW-0479">Metal-binding</keyword>
<keyword id="KW-0547">Nucleotide-binding</keyword>
<keyword id="KW-1185">Reference proteome</keyword>
<keyword id="KW-0808">Transferase</keyword>
<sequence>MRVLVINSGSSSIKYQLIEMEGEKVLCKGIAERIGIEGSRLVHRVGDEKHVIERELPDHEEALKLILNTLVDEKLGVIKDLKEIDAVGHRVVHGGERFKESVLVDEEVLKAIEEVSPLAPLHNPANLMGIKAAMKLLPGVPNVAVFDTAFHQTIPQKAYLYAIPYEYYEKYKIRRYGFHGTSHRYVSKRAAEILGKKLEELKIITCHIGNGASVAAVKYGKCVDTSMGFTPLEGLVMGTRSGDLDPAIPFFIMEKEGISPQEMYDILNKKSGVYGLSKGFSSDMRDIEEAALKGDEWCKLVLEIYDYRIAKYIGAYAAAMNGVDAIVFTAGVGENSPITREDVCSYLEFLGVKLDKQKNEETIRGKEGIISTPDSRVKVLVVPTNEELMIARDTKEIVEKIGR</sequence>
<proteinExistence type="evidence at protein level"/>
<dbReference type="EC" id="2.7.2.1" evidence="1"/>
<dbReference type="EMBL" id="AE000512">
    <property type="protein sequence ID" value="AAD35363.1"/>
    <property type="molecule type" value="Genomic_DNA"/>
</dbReference>
<dbReference type="PIR" id="H72397">
    <property type="entry name" value="H72397"/>
</dbReference>
<dbReference type="RefSeq" id="NP_228087.1">
    <property type="nucleotide sequence ID" value="NC_000853.1"/>
</dbReference>
<dbReference type="RefSeq" id="WP_004082978.1">
    <property type="nucleotide sequence ID" value="NZ_CP011107.1"/>
</dbReference>
<dbReference type="PDB" id="2IIR">
    <property type="method" value="X-ray"/>
    <property type="resolution" value="3.30 A"/>
    <property type="chains" value="A/B/C/D/E/F/G/H/I/J=1-403"/>
</dbReference>
<dbReference type="PDBsum" id="2IIR"/>
<dbReference type="SMR" id="Q9WYB1"/>
<dbReference type="DIP" id="DIP-2899N"/>
<dbReference type="FunCoup" id="Q9WYB1">
    <property type="interactions" value="300"/>
</dbReference>
<dbReference type="STRING" id="243274.TM_0274"/>
<dbReference type="PaxDb" id="243274-THEMA_03355"/>
<dbReference type="EnsemblBacteria" id="AAD35363">
    <property type="protein sequence ID" value="AAD35363"/>
    <property type="gene ID" value="TM_0274"/>
</dbReference>
<dbReference type="KEGG" id="tma:TM0274"/>
<dbReference type="KEGG" id="tmi:THEMA_03355"/>
<dbReference type="KEGG" id="tmm:Tmari_0272"/>
<dbReference type="KEGG" id="tmw:THMA_0281"/>
<dbReference type="eggNOG" id="COG0282">
    <property type="taxonomic scope" value="Bacteria"/>
</dbReference>
<dbReference type="InParanoid" id="Q9WYB1"/>
<dbReference type="OrthoDB" id="9802453at2"/>
<dbReference type="BioCyc" id="MetaCyc:MONOMER-428"/>
<dbReference type="BRENDA" id="2.7.2.1">
    <property type="organism ID" value="6331"/>
</dbReference>
<dbReference type="UniPathway" id="UPA00340">
    <property type="reaction ID" value="UER00458"/>
</dbReference>
<dbReference type="EvolutionaryTrace" id="Q9WYB1"/>
<dbReference type="Proteomes" id="UP000008183">
    <property type="component" value="Chromosome"/>
</dbReference>
<dbReference type="GO" id="GO:0005737">
    <property type="term" value="C:cytoplasm"/>
    <property type="evidence" value="ECO:0007669"/>
    <property type="project" value="UniProtKB-SubCell"/>
</dbReference>
<dbReference type="GO" id="GO:0008776">
    <property type="term" value="F:acetate kinase activity"/>
    <property type="evidence" value="ECO:0000318"/>
    <property type="project" value="GO_Central"/>
</dbReference>
<dbReference type="GO" id="GO:0005524">
    <property type="term" value="F:ATP binding"/>
    <property type="evidence" value="ECO:0007669"/>
    <property type="project" value="UniProtKB-KW"/>
</dbReference>
<dbReference type="GO" id="GO:0000287">
    <property type="term" value="F:magnesium ion binding"/>
    <property type="evidence" value="ECO:0007669"/>
    <property type="project" value="UniProtKB-UniRule"/>
</dbReference>
<dbReference type="GO" id="GO:0006083">
    <property type="term" value="P:acetate metabolic process"/>
    <property type="evidence" value="ECO:0000318"/>
    <property type="project" value="GO_Central"/>
</dbReference>
<dbReference type="GO" id="GO:0006085">
    <property type="term" value="P:acetyl-CoA biosynthetic process"/>
    <property type="evidence" value="ECO:0007669"/>
    <property type="project" value="UniProtKB-UniRule"/>
</dbReference>
<dbReference type="CDD" id="cd24010">
    <property type="entry name" value="ASKHA_NBD_AcK_PK"/>
    <property type="match status" value="1"/>
</dbReference>
<dbReference type="Gene3D" id="3.30.420.40">
    <property type="match status" value="2"/>
</dbReference>
<dbReference type="HAMAP" id="MF_00020">
    <property type="entry name" value="Acetate_kinase"/>
    <property type="match status" value="1"/>
</dbReference>
<dbReference type="InterPro" id="IPR004372">
    <property type="entry name" value="Ac/propionate_kinase"/>
</dbReference>
<dbReference type="InterPro" id="IPR000890">
    <property type="entry name" value="Aliphatic_acid_kin_short-chain"/>
</dbReference>
<dbReference type="InterPro" id="IPR023865">
    <property type="entry name" value="Aliphatic_acid_kinase_CS"/>
</dbReference>
<dbReference type="InterPro" id="IPR043129">
    <property type="entry name" value="ATPase_NBD"/>
</dbReference>
<dbReference type="NCBIfam" id="TIGR00016">
    <property type="entry name" value="ackA"/>
    <property type="match status" value="1"/>
</dbReference>
<dbReference type="PANTHER" id="PTHR21060">
    <property type="entry name" value="ACETATE KINASE"/>
    <property type="match status" value="1"/>
</dbReference>
<dbReference type="PANTHER" id="PTHR21060:SF15">
    <property type="entry name" value="ACETATE KINASE-RELATED"/>
    <property type="match status" value="1"/>
</dbReference>
<dbReference type="Pfam" id="PF00871">
    <property type="entry name" value="Acetate_kinase"/>
    <property type="match status" value="1"/>
</dbReference>
<dbReference type="PIRSF" id="PIRSF000722">
    <property type="entry name" value="Acetate_prop_kin"/>
    <property type="match status" value="1"/>
</dbReference>
<dbReference type="PRINTS" id="PR00471">
    <property type="entry name" value="ACETATEKNASE"/>
</dbReference>
<dbReference type="SUPFAM" id="SSF53067">
    <property type="entry name" value="Actin-like ATPase domain"/>
    <property type="match status" value="2"/>
</dbReference>
<dbReference type="PROSITE" id="PS01075">
    <property type="entry name" value="ACETATE_KINASE_1"/>
    <property type="match status" value="1"/>
</dbReference>
<dbReference type="PROSITE" id="PS01076">
    <property type="entry name" value="ACETATE_KINASE_2"/>
    <property type="match status" value="1"/>
</dbReference>
<evidence type="ECO:0000255" key="1">
    <source>
        <dbReference type="HAMAP-Rule" id="MF_00020"/>
    </source>
</evidence>
<evidence type="ECO:0000269" key="2">
    <source>
    </source>
</evidence>
<evidence type="ECO:0007829" key="3">
    <source>
        <dbReference type="PDB" id="2IIR"/>
    </source>
</evidence>
<organism>
    <name type="scientific">Thermotoga maritima (strain ATCC 43589 / DSM 3109 / JCM 10099 / NBRC 100826 / MSB8)</name>
    <dbReference type="NCBI Taxonomy" id="243274"/>
    <lineage>
        <taxon>Bacteria</taxon>
        <taxon>Thermotogati</taxon>
        <taxon>Thermotogota</taxon>
        <taxon>Thermotogae</taxon>
        <taxon>Thermotogales</taxon>
        <taxon>Thermotogaceae</taxon>
        <taxon>Thermotoga</taxon>
    </lineage>
</organism>
<feature type="chain" id="PRO_0000107631" description="Acetate kinase">
    <location>
        <begin position="1"/>
        <end position="403"/>
    </location>
</feature>
<feature type="active site" description="Proton donor/acceptor" evidence="1">
    <location>
        <position position="147"/>
    </location>
</feature>
<feature type="binding site" evidence="1">
    <location>
        <position position="7"/>
    </location>
    <ligand>
        <name>Mg(2+)</name>
        <dbReference type="ChEBI" id="CHEBI:18420"/>
    </ligand>
</feature>
<feature type="binding site" evidence="1">
    <location>
        <position position="14"/>
    </location>
    <ligand>
        <name>ATP</name>
        <dbReference type="ChEBI" id="CHEBI:30616"/>
    </ligand>
</feature>
<feature type="binding site" evidence="1">
    <location>
        <position position="90"/>
    </location>
    <ligand>
        <name>substrate</name>
    </ligand>
</feature>
<feature type="binding site" evidence="1">
    <location>
        <begin position="207"/>
        <end position="211"/>
    </location>
    <ligand>
        <name>ATP</name>
        <dbReference type="ChEBI" id="CHEBI:30616"/>
    </ligand>
</feature>
<feature type="binding site" evidence="1">
    <location>
        <begin position="283"/>
        <end position="285"/>
    </location>
    <ligand>
        <name>ATP</name>
        <dbReference type="ChEBI" id="CHEBI:30616"/>
    </ligand>
</feature>
<feature type="binding site" evidence="1">
    <location>
        <begin position="331"/>
        <end position="335"/>
    </location>
    <ligand>
        <name>ATP</name>
        <dbReference type="ChEBI" id="CHEBI:30616"/>
    </ligand>
</feature>
<feature type="binding site" evidence="1">
    <location>
        <position position="386"/>
    </location>
    <ligand>
        <name>Mg(2+)</name>
        <dbReference type="ChEBI" id="CHEBI:18420"/>
    </ligand>
</feature>
<feature type="site" description="Transition state stabilizer" evidence="1">
    <location>
        <position position="179"/>
    </location>
</feature>
<feature type="site" description="Transition state stabilizer" evidence="1">
    <location>
        <position position="240"/>
    </location>
</feature>
<feature type="strand" evidence="3">
    <location>
        <begin position="2"/>
        <end position="9"/>
    </location>
</feature>
<feature type="strand" evidence="3">
    <location>
        <begin position="12"/>
        <end position="19"/>
    </location>
</feature>
<feature type="turn" evidence="3">
    <location>
        <begin position="20"/>
        <end position="23"/>
    </location>
</feature>
<feature type="strand" evidence="3">
    <location>
        <begin position="24"/>
        <end position="32"/>
    </location>
</feature>
<feature type="strand" evidence="3">
    <location>
        <begin position="40"/>
        <end position="45"/>
    </location>
</feature>
<feature type="strand" evidence="3">
    <location>
        <begin position="48"/>
        <end position="53"/>
    </location>
</feature>
<feature type="helix" evidence="3">
    <location>
        <begin position="59"/>
        <end position="71"/>
    </location>
</feature>
<feature type="turn" evidence="3">
    <location>
        <begin position="73"/>
        <end position="75"/>
    </location>
</feature>
<feature type="strand" evidence="3">
    <location>
        <begin position="86"/>
        <end position="92"/>
    </location>
</feature>
<feature type="turn" evidence="3">
    <location>
        <begin position="95"/>
        <end position="97"/>
    </location>
</feature>
<feature type="helix" evidence="3">
    <location>
        <begin position="106"/>
        <end position="115"/>
    </location>
</feature>
<feature type="helix" evidence="3">
    <location>
        <begin position="116"/>
        <end position="118"/>
    </location>
</feature>
<feature type="turn" evidence="3">
    <location>
        <begin position="120"/>
        <end position="122"/>
    </location>
</feature>
<feature type="helix" evidence="3">
    <location>
        <begin position="123"/>
        <end position="136"/>
    </location>
</feature>
<feature type="strand" evidence="3">
    <location>
        <begin position="142"/>
        <end position="146"/>
    </location>
</feature>
<feature type="helix" evidence="3">
    <location>
        <begin position="149"/>
        <end position="153"/>
    </location>
</feature>
<feature type="helix" evidence="3">
    <location>
        <begin position="156"/>
        <end position="159"/>
    </location>
</feature>
<feature type="helix" evidence="3">
    <location>
        <begin position="166"/>
        <end position="171"/>
    </location>
</feature>
<feature type="helix" evidence="3">
    <location>
        <begin position="180"/>
        <end position="193"/>
    </location>
</feature>
<feature type="helix" evidence="3">
    <location>
        <begin position="198"/>
        <end position="200"/>
    </location>
</feature>
<feature type="strand" evidence="3">
    <location>
        <begin position="202"/>
        <end position="218"/>
    </location>
</feature>
<feature type="strand" evidence="3">
    <location>
        <begin position="221"/>
        <end position="226"/>
    </location>
</feature>
<feature type="strand" evidence="3">
    <location>
        <begin position="233"/>
        <end position="235"/>
    </location>
</feature>
<feature type="helix" evidence="3">
    <location>
        <begin position="248"/>
        <end position="256"/>
    </location>
</feature>
<feature type="helix" evidence="3">
    <location>
        <begin position="260"/>
        <end position="269"/>
    </location>
</feature>
<feature type="helix" evidence="3">
    <location>
        <begin position="272"/>
        <end position="276"/>
    </location>
</feature>
<feature type="turn" evidence="3">
    <location>
        <begin position="277"/>
        <end position="279"/>
    </location>
</feature>
<feature type="helix" evidence="3">
    <location>
        <begin position="284"/>
        <end position="292"/>
    </location>
</feature>
<feature type="helix" evidence="3">
    <location>
        <begin position="296"/>
        <end position="320"/>
    </location>
</feature>
<feature type="strand" evidence="3">
    <location>
        <begin position="324"/>
        <end position="329"/>
    </location>
</feature>
<feature type="helix" evidence="3">
    <location>
        <begin position="330"/>
        <end position="333"/>
    </location>
</feature>
<feature type="helix" evidence="3">
    <location>
        <begin position="337"/>
        <end position="345"/>
    </location>
</feature>
<feature type="helix" evidence="3">
    <location>
        <begin position="346"/>
        <end position="350"/>
    </location>
</feature>
<feature type="helix" evidence="3">
    <location>
        <begin position="356"/>
        <end position="361"/>
    </location>
</feature>
<feature type="strand" evidence="3">
    <location>
        <begin position="376"/>
        <end position="381"/>
    </location>
</feature>
<feature type="helix" evidence="3">
    <location>
        <begin position="386"/>
        <end position="398"/>
    </location>
</feature>
<gene>
    <name evidence="1" type="primary">ackA</name>
    <name type="ordered locus">TM_0274</name>
</gene>
<comment type="function">
    <text evidence="1 2">Catalyzes the formation of acetyl phosphate from acetate and ATP. Can also catalyze the reverse reaction. Phosphorylates propionate (54%) in addition to acetate (100%). Uses GTP (100%), ITP (163%), UTP (56%), and CTP (21%) as phosphoryl donors in addition to ATP (100%).</text>
</comment>
<comment type="catalytic activity">
    <reaction evidence="1 2">
        <text>acetate + ATP = acetyl phosphate + ADP</text>
        <dbReference type="Rhea" id="RHEA:11352"/>
        <dbReference type="ChEBI" id="CHEBI:22191"/>
        <dbReference type="ChEBI" id="CHEBI:30089"/>
        <dbReference type="ChEBI" id="CHEBI:30616"/>
        <dbReference type="ChEBI" id="CHEBI:456216"/>
        <dbReference type="EC" id="2.7.2.1"/>
    </reaction>
</comment>
<comment type="cofactor">
    <cofactor evidence="1 2">
        <name>Mg(2+)</name>
        <dbReference type="ChEBI" id="CHEBI:18420"/>
    </cofactor>
    <cofactor evidence="1 2">
        <name>Mn(2+)</name>
        <dbReference type="ChEBI" id="CHEBI:29035"/>
    </cofactor>
    <text evidence="1 2">Mg(2+). Can also accept Mn(2+).</text>
</comment>
<comment type="biophysicochemical properties">
    <phDependence>
        <text evidence="2">Optimum pH is 7.0.</text>
    </phDependence>
    <temperatureDependence>
        <text evidence="2">Optimum temperature is 90 degrees Celsius.</text>
    </temperatureDependence>
</comment>
<comment type="pathway">
    <text evidence="1 2">Metabolic intermediate biosynthesis; acetyl-CoA biosynthesis; acetyl-CoA from acetate: step 1/2.</text>
</comment>
<comment type="subunit">
    <text evidence="1 2">Homodimer.</text>
</comment>
<comment type="subcellular location">
    <subcellularLocation>
        <location evidence="1">Cytoplasm</location>
    </subcellularLocation>
</comment>
<comment type="similarity">
    <text evidence="1">Belongs to the acetokinase family.</text>
</comment>
<reference key="1">
    <citation type="journal article" date="1999" name="Nature">
        <title>Evidence for lateral gene transfer between Archaea and Bacteria from genome sequence of Thermotoga maritima.</title>
        <authorList>
            <person name="Nelson K.E."/>
            <person name="Clayton R.A."/>
            <person name="Gill S.R."/>
            <person name="Gwinn M.L."/>
            <person name="Dodson R.J."/>
            <person name="Haft D.H."/>
            <person name="Hickey E.K."/>
            <person name="Peterson J.D."/>
            <person name="Nelson W.C."/>
            <person name="Ketchum K.A."/>
            <person name="McDonald L.A."/>
            <person name="Utterback T.R."/>
            <person name="Malek J.A."/>
            <person name="Linher K.D."/>
            <person name="Garrett M.M."/>
            <person name="Stewart A.M."/>
            <person name="Cotton M.D."/>
            <person name="Pratt M.S."/>
            <person name="Phillips C.A."/>
            <person name="Richardson D.L."/>
            <person name="Heidelberg J.F."/>
            <person name="Sutton G.G."/>
            <person name="Fleischmann R.D."/>
            <person name="Eisen J.A."/>
            <person name="White O."/>
            <person name="Salzberg S.L."/>
            <person name="Smith H.O."/>
            <person name="Venter J.C."/>
            <person name="Fraser C.M."/>
        </authorList>
    </citation>
    <scope>NUCLEOTIDE SEQUENCE [LARGE SCALE GENOMIC DNA]</scope>
    <source>
        <strain>ATCC 43589 / DSM 3109 / JCM 10099 / NBRC 100826 / MSB8</strain>
    </source>
</reference>
<reference key="2">
    <citation type="journal article" date="1999" name="J. Bacteriol.">
        <title>Purification and characterization of two extremely thermostable enzymes, phosphate acetyltransferase and acetate kinase, from the hyperthermophilic eubacterium Thermotoga maritima.</title>
        <authorList>
            <person name="Bock A.-K."/>
            <person name="Glasemacher J."/>
            <person name="Schmidt R."/>
            <person name="Schoenheit P."/>
        </authorList>
    </citation>
    <scope>PROTEIN SEQUENCE OF 1-12</scope>
    <scope>FUNCTION</scope>
    <scope>CATALYTIC ACTIVITY</scope>
    <scope>COFACTOR</scope>
    <scope>BIOPHYSICOCHEMICAL PROPERTIES</scope>
    <scope>PATHWAY</scope>
    <scope>SUBUNIT</scope>
</reference>